<organism>
    <name type="scientific">Chloroflexus aggregans (strain MD-66 / DSM 9485)</name>
    <dbReference type="NCBI Taxonomy" id="326427"/>
    <lineage>
        <taxon>Bacteria</taxon>
        <taxon>Bacillati</taxon>
        <taxon>Chloroflexota</taxon>
        <taxon>Chloroflexia</taxon>
        <taxon>Chloroflexales</taxon>
        <taxon>Chloroflexineae</taxon>
        <taxon>Chloroflexaceae</taxon>
        <taxon>Chloroflexus</taxon>
    </lineage>
</organism>
<comment type="function">
    <text evidence="1">Specifically methylates the N4 position of cytidine in position 1402 (C1402) of 16S rRNA.</text>
</comment>
<comment type="catalytic activity">
    <reaction evidence="1">
        <text>cytidine(1402) in 16S rRNA + S-adenosyl-L-methionine = N(4)-methylcytidine(1402) in 16S rRNA + S-adenosyl-L-homocysteine + H(+)</text>
        <dbReference type="Rhea" id="RHEA:42928"/>
        <dbReference type="Rhea" id="RHEA-COMP:10286"/>
        <dbReference type="Rhea" id="RHEA-COMP:10287"/>
        <dbReference type="ChEBI" id="CHEBI:15378"/>
        <dbReference type="ChEBI" id="CHEBI:57856"/>
        <dbReference type="ChEBI" id="CHEBI:59789"/>
        <dbReference type="ChEBI" id="CHEBI:74506"/>
        <dbReference type="ChEBI" id="CHEBI:82748"/>
        <dbReference type="EC" id="2.1.1.199"/>
    </reaction>
</comment>
<comment type="subcellular location">
    <subcellularLocation>
        <location evidence="1">Cytoplasm</location>
    </subcellularLocation>
</comment>
<comment type="similarity">
    <text evidence="1">Belongs to the methyltransferase superfamily. RsmH family.</text>
</comment>
<dbReference type="EC" id="2.1.1.199" evidence="1"/>
<dbReference type="EMBL" id="CP001337">
    <property type="protein sequence ID" value="ACL25706.1"/>
    <property type="molecule type" value="Genomic_DNA"/>
</dbReference>
<dbReference type="RefSeq" id="WP_015941562.1">
    <property type="nucleotide sequence ID" value="NC_011831.1"/>
</dbReference>
<dbReference type="SMR" id="B8G5X3"/>
<dbReference type="STRING" id="326427.Cagg_2844"/>
<dbReference type="KEGG" id="cag:Cagg_2844"/>
<dbReference type="eggNOG" id="COG0275">
    <property type="taxonomic scope" value="Bacteria"/>
</dbReference>
<dbReference type="HOGENOM" id="CLU_038422_3_0_0"/>
<dbReference type="OrthoDB" id="9806637at2"/>
<dbReference type="Proteomes" id="UP000002508">
    <property type="component" value="Chromosome"/>
</dbReference>
<dbReference type="GO" id="GO:0005737">
    <property type="term" value="C:cytoplasm"/>
    <property type="evidence" value="ECO:0007669"/>
    <property type="project" value="UniProtKB-SubCell"/>
</dbReference>
<dbReference type="GO" id="GO:0071424">
    <property type="term" value="F:rRNA (cytosine-N4-)-methyltransferase activity"/>
    <property type="evidence" value="ECO:0007669"/>
    <property type="project" value="UniProtKB-UniRule"/>
</dbReference>
<dbReference type="GO" id="GO:0070475">
    <property type="term" value="P:rRNA base methylation"/>
    <property type="evidence" value="ECO:0007669"/>
    <property type="project" value="UniProtKB-UniRule"/>
</dbReference>
<dbReference type="CDD" id="cd02440">
    <property type="entry name" value="AdoMet_MTases"/>
    <property type="match status" value="1"/>
</dbReference>
<dbReference type="FunFam" id="1.10.150.170:FF:000003">
    <property type="entry name" value="Ribosomal RNA small subunit methyltransferase H"/>
    <property type="match status" value="1"/>
</dbReference>
<dbReference type="Gene3D" id="1.10.150.170">
    <property type="entry name" value="Putative methyltransferase TM0872, insert domain"/>
    <property type="match status" value="1"/>
</dbReference>
<dbReference type="Gene3D" id="3.40.50.150">
    <property type="entry name" value="Vaccinia Virus protein VP39"/>
    <property type="match status" value="1"/>
</dbReference>
<dbReference type="HAMAP" id="MF_01007">
    <property type="entry name" value="16SrRNA_methyltr_H"/>
    <property type="match status" value="1"/>
</dbReference>
<dbReference type="InterPro" id="IPR002903">
    <property type="entry name" value="RsmH"/>
</dbReference>
<dbReference type="InterPro" id="IPR023397">
    <property type="entry name" value="SAM-dep_MeTrfase_MraW_recog"/>
</dbReference>
<dbReference type="InterPro" id="IPR029063">
    <property type="entry name" value="SAM-dependent_MTases_sf"/>
</dbReference>
<dbReference type="NCBIfam" id="TIGR00006">
    <property type="entry name" value="16S rRNA (cytosine(1402)-N(4))-methyltransferase RsmH"/>
    <property type="match status" value="1"/>
</dbReference>
<dbReference type="PANTHER" id="PTHR11265:SF0">
    <property type="entry name" value="12S RRNA N4-METHYLCYTIDINE METHYLTRANSFERASE"/>
    <property type="match status" value="1"/>
</dbReference>
<dbReference type="PANTHER" id="PTHR11265">
    <property type="entry name" value="S-ADENOSYL-METHYLTRANSFERASE MRAW"/>
    <property type="match status" value="1"/>
</dbReference>
<dbReference type="Pfam" id="PF01795">
    <property type="entry name" value="Methyltransf_5"/>
    <property type="match status" value="1"/>
</dbReference>
<dbReference type="PIRSF" id="PIRSF004486">
    <property type="entry name" value="MraW"/>
    <property type="match status" value="1"/>
</dbReference>
<dbReference type="SUPFAM" id="SSF81799">
    <property type="entry name" value="Putative methyltransferase TM0872, insert domain"/>
    <property type="match status" value="1"/>
</dbReference>
<dbReference type="SUPFAM" id="SSF53335">
    <property type="entry name" value="S-adenosyl-L-methionine-dependent methyltransferases"/>
    <property type="match status" value="1"/>
</dbReference>
<reference key="1">
    <citation type="submission" date="2008-12" db="EMBL/GenBank/DDBJ databases">
        <title>Complete sequence of Chloroflexus aggregans DSM 9485.</title>
        <authorList>
            <consortium name="US DOE Joint Genome Institute"/>
            <person name="Lucas S."/>
            <person name="Copeland A."/>
            <person name="Lapidus A."/>
            <person name="Glavina del Rio T."/>
            <person name="Dalin E."/>
            <person name="Tice H."/>
            <person name="Pitluck S."/>
            <person name="Foster B."/>
            <person name="Larimer F."/>
            <person name="Land M."/>
            <person name="Hauser L."/>
            <person name="Kyrpides N."/>
            <person name="Mikhailova N."/>
            <person name="Bryant D.A."/>
            <person name="Richardson P."/>
        </authorList>
    </citation>
    <scope>NUCLEOTIDE SEQUENCE [LARGE SCALE GENOMIC DNA]</scope>
    <source>
        <strain>MD-66 / DSM 9485</strain>
    </source>
</reference>
<sequence>MVVTFQHVPVMVAEVVAALAPRPGGRYIDATVGGGGHALAVLQAARPGGRLLGIDADPAALVATADRLAEAGLREHAVLCHGSFADLAVIAGETGFINVDGILFDLGVSSYQLDTPERGFSFAADGPLDMRLDPTQGPTAADLVNTLSERELADVIFQYGEEHAARRIARAIVERRRTQPFQRTADLAAVIARVVGGRRGRIHPATRTFQALRIAVNRELDRLAAALPQAVHLLAPGGRLVVISFHSLEDRIVKQFMRAEAEGATPRLVINTKKPVAATDDEVATNPRARSAKLRVATRIV</sequence>
<protein>
    <recommendedName>
        <fullName evidence="1">Ribosomal RNA small subunit methyltransferase H</fullName>
        <ecNumber evidence="1">2.1.1.199</ecNumber>
    </recommendedName>
    <alternativeName>
        <fullName evidence="1">16S rRNA m(4)C1402 methyltransferase</fullName>
    </alternativeName>
    <alternativeName>
        <fullName evidence="1">rRNA (cytosine-N(4)-)-methyltransferase RsmH</fullName>
    </alternativeName>
</protein>
<feature type="chain" id="PRO_0000386801" description="Ribosomal RNA small subunit methyltransferase H">
    <location>
        <begin position="1"/>
        <end position="301"/>
    </location>
</feature>
<feature type="binding site" evidence="1">
    <location>
        <begin position="35"/>
        <end position="37"/>
    </location>
    <ligand>
        <name>S-adenosyl-L-methionine</name>
        <dbReference type="ChEBI" id="CHEBI:59789"/>
    </ligand>
</feature>
<feature type="binding site" evidence="1">
    <location>
        <position position="55"/>
    </location>
    <ligand>
        <name>S-adenosyl-L-methionine</name>
        <dbReference type="ChEBI" id="CHEBI:59789"/>
    </ligand>
</feature>
<feature type="binding site" evidence="1">
    <location>
        <position position="84"/>
    </location>
    <ligand>
        <name>S-adenosyl-L-methionine</name>
        <dbReference type="ChEBI" id="CHEBI:59789"/>
    </ligand>
</feature>
<feature type="binding site" evidence="1">
    <location>
        <position position="105"/>
    </location>
    <ligand>
        <name>S-adenosyl-L-methionine</name>
        <dbReference type="ChEBI" id="CHEBI:59789"/>
    </ligand>
</feature>
<feature type="binding site" evidence="1">
    <location>
        <position position="112"/>
    </location>
    <ligand>
        <name>S-adenosyl-L-methionine</name>
        <dbReference type="ChEBI" id="CHEBI:59789"/>
    </ligand>
</feature>
<keyword id="KW-0963">Cytoplasm</keyword>
<keyword id="KW-0489">Methyltransferase</keyword>
<keyword id="KW-0698">rRNA processing</keyword>
<keyword id="KW-0949">S-adenosyl-L-methionine</keyword>
<keyword id="KW-0808">Transferase</keyword>
<proteinExistence type="inferred from homology"/>
<gene>
    <name evidence="1" type="primary">rsmH</name>
    <name type="synonym">mraW</name>
    <name type="ordered locus">Cagg_2844</name>
</gene>
<evidence type="ECO:0000255" key="1">
    <source>
        <dbReference type="HAMAP-Rule" id="MF_01007"/>
    </source>
</evidence>
<accession>B8G5X3</accession>
<name>RSMH_CHLAD</name>